<evidence type="ECO:0000255" key="1">
    <source>
        <dbReference type="HAMAP-Rule" id="MF_00385"/>
    </source>
</evidence>
<evidence type="ECO:0000256" key="2">
    <source>
        <dbReference type="SAM" id="MobiDB-lite"/>
    </source>
</evidence>
<evidence type="ECO:0000305" key="3"/>
<organism>
    <name type="scientific">Prochlorococcus marinus (strain SARG / CCMP1375 / SS120)</name>
    <dbReference type="NCBI Taxonomy" id="167539"/>
    <lineage>
        <taxon>Bacteria</taxon>
        <taxon>Bacillati</taxon>
        <taxon>Cyanobacteriota</taxon>
        <taxon>Cyanophyceae</taxon>
        <taxon>Synechococcales</taxon>
        <taxon>Prochlorococcaceae</taxon>
        <taxon>Prochlorococcus</taxon>
    </lineage>
</organism>
<proteinExistence type="inferred from homology"/>
<gene>
    <name evidence="1" type="primary">rpsP</name>
    <name evidence="1" type="synonym">rps16</name>
    <name type="ordered locus">Pro_1359</name>
</gene>
<feature type="chain" id="PRO_0000167223" description="Small ribosomal subunit protein bS16">
    <location>
        <begin position="1"/>
        <end position="131"/>
    </location>
</feature>
<feature type="region of interest" description="Disordered" evidence="2">
    <location>
        <begin position="87"/>
        <end position="131"/>
    </location>
</feature>
<feature type="compositionally biased region" description="Basic and acidic residues" evidence="2">
    <location>
        <begin position="87"/>
        <end position="117"/>
    </location>
</feature>
<keyword id="KW-1185">Reference proteome</keyword>
<keyword id="KW-0687">Ribonucleoprotein</keyword>
<keyword id="KW-0689">Ribosomal protein</keyword>
<accession>Q7VAU5</accession>
<dbReference type="EMBL" id="AE017126">
    <property type="protein sequence ID" value="AAQ00403.1"/>
    <property type="molecule type" value="Genomic_DNA"/>
</dbReference>
<dbReference type="RefSeq" id="NP_875750.1">
    <property type="nucleotide sequence ID" value="NC_005042.1"/>
</dbReference>
<dbReference type="RefSeq" id="WP_011125510.1">
    <property type="nucleotide sequence ID" value="NC_005042.1"/>
</dbReference>
<dbReference type="SMR" id="Q7VAU5"/>
<dbReference type="STRING" id="167539.Pro_1359"/>
<dbReference type="EnsemblBacteria" id="AAQ00403">
    <property type="protein sequence ID" value="AAQ00403"/>
    <property type="gene ID" value="Pro_1359"/>
</dbReference>
<dbReference type="KEGG" id="pma:Pro_1359"/>
<dbReference type="PATRIC" id="fig|167539.5.peg.1425"/>
<dbReference type="eggNOG" id="COG0228">
    <property type="taxonomic scope" value="Bacteria"/>
</dbReference>
<dbReference type="HOGENOM" id="CLU_100590_3_2_3"/>
<dbReference type="OrthoDB" id="9807878at2"/>
<dbReference type="Proteomes" id="UP000001420">
    <property type="component" value="Chromosome"/>
</dbReference>
<dbReference type="GO" id="GO:0005737">
    <property type="term" value="C:cytoplasm"/>
    <property type="evidence" value="ECO:0007669"/>
    <property type="project" value="UniProtKB-ARBA"/>
</dbReference>
<dbReference type="GO" id="GO:0015935">
    <property type="term" value="C:small ribosomal subunit"/>
    <property type="evidence" value="ECO:0007669"/>
    <property type="project" value="TreeGrafter"/>
</dbReference>
<dbReference type="GO" id="GO:0003735">
    <property type="term" value="F:structural constituent of ribosome"/>
    <property type="evidence" value="ECO:0007669"/>
    <property type="project" value="InterPro"/>
</dbReference>
<dbReference type="GO" id="GO:0006412">
    <property type="term" value="P:translation"/>
    <property type="evidence" value="ECO:0007669"/>
    <property type="project" value="UniProtKB-UniRule"/>
</dbReference>
<dbReference type="Gene3D" id="3.30.1320.10">
    <property type="match status" value="1"/>
</dbReference>
<dbReference type="HAMAP" id="MF_00385">
    <property type="entry name" value="Ribosomal_bS16"/>
    <property type="match status" value="1"/>
</dbReference>
<dbReference type="InterPro" id="IPR000307">
    <property type="entry name" value="Ribosomal_bS16"/>
</dbReference>
<dbReference type="InterPro" id="IPR020592">
    <property type="entry name" value="Ribosomal_bS16_CS"/>
</dbReference>
<dbReference type="InterPro" id="IPR023803">
    <property type="entry name" value="Ribosomal_bS16_dom_sf"/>
</dbReference>
<dbReference type="NCBIfam" id="TIGR00002">
    <property type="entry name" value="S16"/>
    <property type="match status" value="1"/>
</dbReference>
<dbReference type="PANTHER" id="PTHR12919">
    <property type="entry name" value="30S RIBOSOMAL PROTEIN S16"/>
    <property type="match status" value="1"/>
</dbReference>
<dbReference type="PANTHER" id="PTHR12919:SF20">
    <property type="entry name" value="SMALL RIBOSOMAL SUBUNIT PROTEIN BS16M"/>
    <property type="match status" value="1"/>
</dbReference>
<dbReference type="Pfam" id="PF00886">
    <property type="entry name" value="Ribosomal_S16"/>
    <property type="match status" value="1"/>
</dbReference>
<dbReference type="SUPFAM" id="SSF54565">
    <property type="entry name" value="Ribosomal protein S16"/>
    <property type="match status" value="1"/>
</dbReference>
<dbReference type="PROSITE" id="PS00732">
    <property type="entry name" value="RIBOSOMAL_S16"/>
    <property type="match status" value="1"/>
</dbReference>
<sequence length="131" mass="14831">MIKLRLKRFGKKREASFRLVACNSTSRRDGRPLQELGFYNPRTKETRLDTEALRLRLSQGAQPTDAVRSLLEKGGLLEKTIRPAELIGKSKQEELRKSEAKTSAKNKKANEEKANEEKVEESETLEASSEA</sequence>
<comment type="similarity">
    <text evidence="1">Belongs to the bacterial ribosomal protein bS16 family.</text>
</comment>
<protein>
    <recommendedName>
        <fullName evidence="1">Small ribosomal subunit protein bS16</fullName>
    </recommendedName>
    <alternativeName>
        <fullName evidence="3">30S ribosomal protein S16</fullName>
    </alternativeName>
</protein>
<reference key="1">
    <citation type="journal article" date="2003" name="Proc. Natl. Acad. Sci. U.S.A.">
        <title>Genome sequence of the cyanobacterium Prochlorococcus marinus SS120, a nearly minimal oxyphototrophic genome.</title>
        <authorList>
            <person name="Dufresne A."/>
            <person name="Salanoubat M."/>
            <person name="Partensky F."/>
            <person name="Artiguenave F."/>
            <person name="Axmann I.M."/>
            <person name="Barbe V."/>
            <person name="Duprat S."/>
            <person name="Galperin M.Y."/>
            <person name="Koonin E.V."/>
            <person name="Le Gall F."/>
            <person name="Makarova K.S."/>
            <person name="Ostrowski M."/>
            <person name="Oztas S."/>
            <person name="Robert C."/>
            <person name="Rogozin I.B."/>
            <person name="Scanlan D.J."/>
            <person name="Tandeau de Marsac N."/>
            <person name="Weissenbach J."/>
            <person name="Wincker P."/>
            <person name="Wolf Y.I."/>
            <person name="Hess W.R."/>
        </authorList>
    </citation>
    <scope>NUCLEOTIDE SEQUENCE [LARGE SCALE GENOMIC DNA]</scope>
    <source>
        <strain>SARG / CCMP1375 / SS120</strain>
    </source>
</reference>
<name>RS16_PROMA</name>